<feature type="chain" id="PRO_1000121303" description="GTPase Era">
    <location>
        <begin position="1"/>
        <end position="290"/>
    </location>
</feature>
<feature type="domain" description="Era-type G" evidence="2">
    <location>
        <begin position="2"/>
        <end position="169"/>
    </location>
</feature>
<feature type="domain" description="KH type-2" evidence="1">
    <location>
        <begin position="200"/>
        <end position="276"/>
    </location>
</feature>
<feature type="region of interest" description="G1" evidence="2">
    <location>
        <begin position="10"/>
        <end position="17"/>
    </location>
</feature>
<feature type="region of interest" description="G2" evidence="2">
    <location>
        <begin position="36"/>
        <end position="40"/>
    </location>
</feature>
<feature type="region of interest" description="G3" evidence="2">
    <location>
        <begin position="57"/>
        <end position="60"/>
    </location>
</feature>
<feature type="region of interest" description="G4" evidence="2">
    <location>
        <begin position="119"/>
        <end position="122"/>
    </location>
</feature>
<feature type="region of interest" description="G5" evidence="2">
    <location>
        <begin position="148"/>
        <end position="150"/>
    </location>
</feature>
<feature type="binding site" evidence="1">
    <location>
        <begin position="10"/>
        <end position="17"/>
    </location>
    <ligand>
        <name>GTP</name>
        <dbReference type="ChEBI" id="CHEBI:37565"/>
    </ligand>
</feature>
<feature type="binding site" evidence="1">
    <location>
        <begin position="57"/>
        <end position="61"/>
    </location>
    <ligand>
        <name>GTP</name>
        <dbReference type="ChEBI" id="CHEBI:37565"/>
    </ligand>
</feature>
<feature type="binding site" evidence="1">
    <location>
        <begin position="119"/>
        <end position="122"/>
    </location>
    <ligand>
        <name>GTP</name>
        <dbReference type="ChEBI" id="CHEBI:37565"/>
    </ligand>
</feature>
<comment type="function">
    <text evidence="1">An essential GTPase that binds both GDP and GTP, with rapid nucleotide exchange. Plays a role in 16S rRNA processing and 30S ribosomal subunit biogenesis and possibly also in cell cycle regulation and energy metabolism.</text>
</comment>
<comment type="subunit">
    <text evidence="1">Monomer.</text>
</comment>
<comment type="subcellular location">
    <subcellularLocation>
        <location>Cytoplasm</location>
    </subcellularLocation>
    <subcellularLocation>
        <location evidence="1">Cell inner membrane</location>
        <topology evidence="1">Peripheral membrane protein</topology>
    </subcellularLocation>
</comment>
<comment type="similarity">
    <text evidence="1 2">Belongs to the TRAFAC class TrmE-Era-EngA-EngB-Septin-like GTPase superfamily. Era GTPase family.</text>
</comment>
<accession>B2S103</accession>
<keyword id="KW-0997">Cell inner membrane</keyword>
<keyword id="KW-1003">Cell membrane</keyword>
<keyword id="KW-0963">Cytoplasm</keyword>
<keyword id="KW-0342">GTP-binding</keyword>
<keyword id="KW-0472">Membrane</keyword>
<keyword id="KW-0547">Nucleotide-binding</keyword>
<keyword id="KW-0690">Ribosome biogenesis</keyword>
<keyword id="KW-0694">RNA-binding</keyword>
<keyword id="KW-0699">rRNA-binding</keyword>
<sequence>MKSGFVSIIGRPSTGKSTLLNSICGHQISIISSTPQTTRNKIKGIFTDKRGQIIFIDTPGFHLSKKKFNIALMNNVHSAITETELILYVIDIQDEPGIEENEILTIISKSKINFLVVINKIDIQKTKEREIMIFLEKKGIKKDNIIKISAEQKINIEEIKDKIYANLQEGPLYYPEEYYTDQEMNLRTSEIIRGVTIKKLKEELPYSLYTQIEILEDRKNKLFIKANIIVAGESQKGIIVGKGGQGIKAIGEEARKIISKIFEKKCDLFLQVKLRKNWNKNSKLIKNLIN</sequence>
<gene>
    <name evidence="1" type="primary">era</name>
    <name type="ordered locus">BH0660</name>
</gene>
<proteinExistence type="inferred from homology"/>
<organism>
    <name type="scientific">Borrelia hermsii (strain HS1 / DAH)</name>
    <dbReference type="NCBI Taxonomy" id="314723"/>
    <lineage>
        <taxon>Bacteria</taxon>
        <taxon>Pseudomonadati</taxon>
        <taxon>Spirochaetota</taxon>
        <taxon>Spirochaetia</taxon>
        <taxon>Spirochaetales</taxon>
        <taxon>Borreliaceae</taxon>
        <taxon>Borrelia</taxon>
    </lineage>
</organism>
<protein>
    <recommendedName>
        <fullName evidence="1">GTPase Era</fullName>
    </recommendedName>
</protein>
<name>ERA_BORHD</name>
<evidence type="ECO:0000255" key="1">
    <source>
        <dbReference type="HAMAP-Rule" id="MF_00367"/>
    </source>
</evidence>
<evidence type="ECO:0000255" key="2">
    <source>
        <dbReference type="PROSITE-ProRule" id="PRU01050"/>
    </source>
</evidence>
<reference key="1">
    <citation type="submission" date="2004-12" db="EMBL/GenBank/DDBJ databases">
        <title>The genome sequence of Borrelia hermsii and Borrelia turicatae: comparative analysis of two agents of endemic N. America relapsing fever.</title>
        <authorList>
            <person name="Porcella S.F."/>
            <person name="Raffel S.J."/>
            <person name="Schrumpf M.E."/>
            <person name="Montgomery B."/>
            <person name="Smith T."/>
            <person name="Schwan T.G."/>
        </authorList>
    </citation>
    <scope>NUCLEOTIDE SEQUENCE [LARGE SCALE GENOMIC DNA]</scope>
    <source>
        <strain>HS1 / DAH</strain>
    </source>
</reference>
<dbReference type="EMBL" id="CP000048">
    <property type="protein sequence ID" value="AAX17159.1"/>
    <property type="molecule type" value="Genomic_DNA"/>
</dbReference>
<dbReference type="RefSeq" id="WP_012422410.1">
    <property type="nucleotide sequence ID" value="NZ_CP073136.1"/>
</dbReference>
<dbReference type="SMR" id="B2S103"/>
<dbReference type="GeneID" id="71843484"/>
<dbReference type="KEGG" id="bhr:BH0660"/>
<dbReference type="HOGENOM" id="CLU_038009_1_0_12"/>
<dbReference type="Proteomes" id="UP000008834">
    <property type="component" value="Chromosome"/>
</dbReference>
<dbReference type="GO" id="GO:0005829">
    <property type="term" value="C:cytosol"/>
    <property type="evidence" value="ECO:0007669"/>
    <property type="project" value="TreeGrafter"/>
</dbReference>
<dbReference type="GO" id="GO:0005886">
    <property type="term" value="C:plasma membrane"/>
    <property type="evidence" value="ECO:0007669"/>
    <property type="project" value="UniProtKB-SubCell"/>
</dbReference>
<dbReference type="GO" id="GO:0016887">
    <property type="term" value="F:ATP hydrolysis activity"/>
    <property type="evidence" value="ECO:0007669"/>
    <property type="project" value="InterPro"/>
</dbReference>
<dbReference type="GO" id="GO:0005525">
    <property type="term" value="F:GTP binding"/>
    <property type="evidence" value="ECO:0007669"/>
    <property type="project" value="UniProtKB-UniRule"/>
</dbReference>
<dbReference type="GO" id="GO:0003924">
    <property type="term" value="F:GTPase activity"/>
    <property type="evidence" value="ECO:0007669"/>
    <property type="project" value="UniProtKB-UniRule"/>
</dbReference>
<dbReference type="GO" id="GO:0043024">
    <property type="term" value="F:ribosomal small subunit binding"/>
    <property type="evidence" value="ECO:0007669"/>
    <property type="project" value="TreeGrafter"/>
</dbReference>
<dbReference type="GO" id="GO:0070181">
    <property type="term" value="F:small ribosomal subunit rRNA binding"/>
    <property type="evidence" value="ECO:0007669"/>
    <property type="project" value="UniProtKB-UniRule"/>
</dbReference>
<dbReference type="GO" id="GO:0000028">
    <property type="term" value="P:ribosomal small subunit assembly"/>
    <property type="evidence" value="ECO:0007669"/>
    <property type="project" value="TreeGrafter"/>
</dbReference>
<dbReference type="CDD" id="cd04163">
    <property type="entry name" value="Era"/>
    <property type="match status" value="1"/>
</dbReference>
<dbReference type="CDD" id="cd22534">
    <property type="entry name" value="KH-II_Era"/>
    <property type="match status" value="1"/>
</dbReference>
<dbReference type="Gene3D" id="3.30.300.20">
    <property type="match status" value="1"/>
</dbReference>
<dbReference type="Gene3D" id="3.40.50.300">
    <property type="entry name" value="P-loop containing nucleotide triphosphate hydrolases"/>
    <property type="match status" value="1"/>
</dbReference>
<dbReference type="HAMAP" id="MF_00367">
    <property type="entry name" value="GTPase_Era"/>
    <property type="match status" value="1"/>
</dbReference>
<dbReference type="InterPro" id="IPR003593">
    <property type="entry name" value="AAA+_ATPase"/>
</dbReference>
<dbReference type="InterPro" id="IPR030388">
    <property type="entry name" value="G_ERA_dom"/>
</dbReference>
<dbReference type="InterPro" id="IPR006073">
    <property type="entry name" value="GTP-bd"/>
</dbReference>
<dbReference type="InterPro" id="IPR005662">
    <property type="entry name" value="GTPase_Era-like"/>
</dbReference>
<dbReference type="InterPro" id="IPR015946">
    <property type="entry name" value="KH_dom-like_a/b"/>
</dbReference>
<dbReference type="InterPro" id="IPR004044">
    <property type="entry name" value="KH_dom_type_2"/>
</dbReference>
<dbReference type="InterPro" id="IPR009019">
    <property type="entry name" value="KH_sf_prok-type"/>
</dbReference>
<dbReference type="InterPro" id="IPR027417">
    <property type="entry name" value="P-loop_NTPase"/>
</dbReference>
<dbReference type="InterPro" id="IPR005225">
    <property type="entry name" value="Small_GTP-bd"/>
</dbReference>
<dbReference type="NCBIfam" id="TIGR00436">
    <property type="entry name" value="era"/>
    <property type="match status" value="1"/>
</dbReference>
<dbReference type="NCBIfam" id="NF000908">
    <property type="entry name" value="PRK00089.1"/>
    <property type="match status" value="1"/>
</dbReference>
<dbReference type="NCBIfam" id="TIGR00231">
    <property type="entry name" value="small_GTP"/>
    <property type="match status" value="1"/>
</dbReference>
<dbReference type="PANTHER" id="PTHR42698">
    <property type="entry name" value="GTPASE ERA"/>
    <property type="match status" value="1"/>
</dbReference>
<dbReference type="PANTHER" id="PTHR42698:SF1">
    <property type="entry name" value="GTPASE ERA, MITOCHONDRIAL"/>
    <property type="match status" value="1"/>
</dbReference>
<dbReference type="Pfam" id="PF07650">
    <property type="entry name" value="KH_2"/>
    <property type="match status" value="1"/>
</dbReference>
<dbReference type="Pfam" id="PF01926">
    <property type="entry name" value="MMR_HSR1"/>
    <property type="match status" value="1"/>
</dbReference>
<dbReference type="PRINTS" id="PR00326">
    <property type="entry name" value="GTP1OBG"/>
</dbReference>
<dbReference type="SMART" id="SM00382">
    <property type="entry name" value="AAA"/>
    <property type="match status" value="1"/>
</dbReference>
<dbReference type="SUPFAM" id="SSF52540">
    <property type="entry name" value="P-loop containing nucleoside triphosphate hydrolases"/>
    <property type="match status" value="1"/>
</dbReference>
<dbReference type="SUPFAM" id="SSF54814">
    <property type="entry name" value="Prokaryotic type KH domain (KH-domain type II)"/>
    <property type="match status" value="1"/>
</dbReference>
<dbReference type="PROSITE" id="PS51713">
    <property type="entry name" value="G_ERA"/>
    <property type="match status" value="1"/>
</dbReference>
<dbReference type="PROSITE" id="PS50823">
    <property type="entry name" value="KH_TYPE_2"/>
    <property type="match status" value="1"/>
</dbReference>